<accession>O60999</accession>
<accession>Q54DW6</accession>
<dbReference type="EMBL" id="AF020287">
    <property type="protein sequence ID" value="AAC15412.1"/>
    <property type="molecule type" value="mRNA"/>
</dbReference>
<dbReference type="EMBL" id="AAFI02000187">
    <property type="protein sequence ID" value="EAL61342.1"/>
    <property type="molecule type" value="Genomic_DNA"/>
</dbReference>
<dbReference type="RefSeq" id="XP_629756.1">
    <property type="nucleotide sequence ID" value="XM_629754.1"/>
</dbReference>
<dbReference type="SMR" id="O60999"/>
<dbReference type="FunCoup" id="O60999">
    <property type="interactions" value="514"/>
</dbReference>
<dbReference type="STRING" id="44689.O60999"/>
<dbReference type="PaxDb" id="44689-DDB0185191"/>
<dbReference type="EnsemblProtists" id="EAL61342">
    <property type="protein sequence ID" value="EAL61342"/>
    <property type="gene ID" value="DDB_G0291972"/>
</dbReference>
<dbReference type="GeneID" id="8628431"/>
<dbReference type="KEGG" id="ddi:DDB_G0291972"/>
<dbReference type="dictyBase" id="DDB_G0291972">
    <property type="gene designation" value="culA"/>
</dbReference>
<dbReference type="VEuPathDB" id="AmoebaDB:DDB_G0291972"/>
<dbReference type="eggNOG" id="KOG2166">
    <property type="taxonomic scope" value="Eukaryota"/>
</dbReference>
<dbReference type="HOGENOM" id="CLU_004747_6_1_1"/>
<dbReference type="InParanoid" id="O60999"/>
<dbReference type="OMA" id="IREWDRY"/>
<dbReference type="PhylomeDB" id="O60999"/>
<dbReference type="Reactome" id="R-DDI-8951664">
    <property type="pathway name" value="Neddylation"/>
</dbReference>
<dbReference type="Reactome" id="R-DDI-983168">
    <property type="pathway name" value="Antigen processing: Ubiquitination &amp; Proteasome degradation"/>
</dbReference>
<dbReference type="UniPathway" id="UPA00143"/>
<dbReference type="PRO" id="PR:O60999"/>
<dbReference type="Proteomes" id="UP000002195">
    <property type="component" value="Chromosome 6"/>
</dbReference>
<dbReference type="GO" id="GO:0031461">
    <property type="term" value="C:cullin-RING ubiquitin ligase complex"/>
    <property type="evidence" value="ECO:0000318"/>
    <property type="project" value="GO_Central"/>
</dbReference>
<dbReference type="GO" id="GO:0019005">
    <property type="term" value="C:SCF ubiquitin ligase complex"/>
    <property type="evidence" value="ECO:0000314"/>
    <property type="project" value="dictyBase"/>
</dbReference>
<dbReference type="GO" id="GO:0031625">
    <property type="term" value="F:ubiquitin protein ligase binding"/>
    <property type="evidence" value="ECO:0000318"/>
    <property type="project" value="GO_Central"/>
</dbReference>
<dbReference type="GO" id="GO:0004842">
    <property type="term" value="F:ubiquitin-protein transferase activity"/>
    <property type="evidence" value="ECO:0000250"/>
    <property type="project" value="dictyBase"/>
</dbReference>
<dbReference type="GO" id="GO:0030154">
    <property type="term" value="P:cell differentiation"/>
    <property type="evidence" value="ECO:0000315"/>
    <property type="project" value="dictyBase"/>
</dbReference>
<dbReference type="GO" id="GO:0006935">
    <property type="term" value="P:chemotaxis"/>
    <property type="evidence" value="ECO:0000315"/>
    <property type="project" value="dictyBase"/>
</dbReference>
<dbReference type="GO" id="GO:0000082">
    <property type="term" value="P:G1/S transition of mitotic cell cycle"/>
    <property type="evidence" value="ECO:0000250"/>
    <property type="project" value="dictyBase"/>
</dbReference>
<dbReference type="GO" id="GO:0016567">
    <property type="term" value="P:protein ubiquitination"/>
    <property type="evidence" value="ECO:0000318"/>
    <property type="project" value="GO_Central"/>
</dbReference>
<dbReference type="GO" id="GO:0030587">
    <property type="term" value="P:sorocarp development"/>
    <property type="evidence" value="ECO:0000315"/>
    <property type="project" value="dictyBase"/>
</dbReference>
<dbReference type="GO" id="GO:0006511">
    <property type="term" value="P:ubiquitin-dependent protein catabolic process"/>
    <property type="evidence" value="ECO:0007669"/>
    <property type="project" value="InterPro"/>
</dbReference>
<dbReference type="FunFam" id="3.30.230.130:FF:000031">
    <property type="entry name" value="Cullin"/>
    <property type="match status" value="1"/>
</dbReference>
<dbReference type="FunFam" id="1.10.10.10:FF:000014">
    <property type="entry name" value="Cullin 1"/>
    <property type="match status" value="1"/>
</dbReference>
<dbReference type="FunFam" id="1.20.1310.10:FF:000007">
    <property type="entry name" value="Cullin 1"/>
    <property type="match status" value="1"/>
</dbReference>
<dbReference type="FunFam" id="1.20.1310.10:FF:000011">
    <property type="entry name" value="Cullin 1"/>
    <property type="match status" value="1"/>
</dbReference>
<dbReference type="FunFam" id="1.20.1310.10:FF:000026">
    <property type="entry name" value="Cullin 1"/>
    <property type="match status" value="1"/>
</dbReference>
<dbReference type="FunFam" id="1.20.1310.10:FF:000029">
    <property type="entry name" value="Cullin homolog 1"/>
    <property type="match status" value="1"/>
</dbReference>
<dbReference type="Gene3D" id="1.20.1310.10">
    <property type="entry name" value="Cullin Repeats"/>
    <property type="match status" value="4"/>
</dbReference>
<dbReference type="Gene3D" id="3.30.230.130">
    <property type="entry name" value="Cullin, Chain C, Domain 2"/>
    <property type="match status" value="1"/>
</dbReference>
<dbReference type="Gene3D" id="1.10.10.10">
    <property type="entry name" value="Winged helix-like DNA-binding domain superfamily/Winged helix DNA-binding domain"/>
    <property type="match status" value="1"/>
</dbReference>
<dbReference type="InterPro" id="IPR045093">
    <property type="entry name" value="Cullin"/>
</dbReference>
<dbReference type="InterPro" id="IPR016157">
    <property type="entry name" value="Cullin_CS"/>
</dbReference>
<dbReference type="InterPro" id="IPR016158">
    <property type="entry name" value="Cullin_homology"/>
</dbReference>
<dbReference type="InterPro" id="IPR036317">
    <property type="entry name" value="Cullin_homology_sf"/>
</dbReference>
<dbReference type="InterPro" id="IPR001373">
    <property type="entry name" value="Cullin_N"/>
</dbReference>
<dbReference type="InterPro" id="IPR019559">
    <property type="entry name" value="Cullin_neddylation_domain"/>
</dbReference>
<dbReference type="InterPro" id="IPR016159">
    <property type="entry name" value="Cullin_repeat-like_dom_sf"/>
</dbReference>
<dbReference type="InterPro" id="IPR036388">
    <property type="entry name" value="WH-like_DNA-bd_sf"/>
</dbReference>
<dbReference type="InterPro" id="IPR036390">
    <property type="entry name" value="WH_DNA-bd_sf"/>
</dbReference>
<dbReference type="PANTHER" id="PTHR11932">
    <property type="entry name" value="CULLIN"/>
    <property type="match status" value="1"/>
</dbReference>
<dbReference type="Pfam" id="PF00888">
    <property type="entry name" value="Cullin"/>
    <property type="match status" value="1"/>
</dbReference>
<dbReference type="Pfam" id="PF10557">
    <property type="entry name" value="Cullin_Nedd8"/>
    <property type="match status" value="1"/>
</dbReference>
<dbReference type="SMART" id="SM00182">
    <property type="entry name" value="CULLIN"/>
    <property type="match status" value="1"/>
</dbReference>
<dbReference type="SMART" id="SM00884">
    <property type="entry name" value="Cullin_Nedd8"/>
    <property type="match status" value="1"/>
</dbReference>
<dbReference type="SUPFAM" id="SSF75632">
    <property type="entry name" value="Cullin homology domain"/>
    <property type="match status" value="1"/>
</dbReference>
<dbReference type="SUPFAM" id="SSF74788">
    <property type="entry name" value="Cullin repeat-like"/>
    <property type="match status" value="1"/>
</dbReference>
<dbReference type="SUPFAM" id="SSF46785">
    <property type="entry name" value="Winged helix' DNA-binding domain"/>
    <property type="match status" value="1"/>
</dbReference>
<dbReference type="PROSITE" id="PS01256">
    <property type="entry name" value="CULLIN_1"/>
    <property type="match status" value="1"/>
</dbReference>
<dbReference type="PROSITE" id="PS50069">
    <property type="entry name" value="CULLIN_2"/>
    <property type="match status" value="1"/>
</dbReference>
<feature type="chain" id="PRO_0000345010" description="Cullin-1">
    <location>
        <begin position="1"/>
        <end position="770"/>
    </location>
</feature>
<feature type="domain" description="Cullin neddylation" evidence="3">
    <location>
        <begin position="700"/>
        <end position="761"/>
    </location>
</feature>
<feature type="cross-link" description="Glycyl lysine isopeptide (Lys-Gly) (interchain with G-Cter in NEDD8)" evidence="2">
    <location>
        <position position="714"/>
    </location>
</feature>
<name>CUL1_DICDI</name>
<comment type="function">
    <text evidence="1 5">Probable core component of cullin-based SCF-like E3 ubiquitin-protein ligase complexes which mediate the ubiquitination and subsequent proteasomal degradation of target proteins. The E3 ubiquitin-protein ligase activity of the complex is dependent on the neddylation of the cullin subunit (By similarity). Required at several stages during development. CulA and fbxA regulate multicellular development by targeting regA for degradation via a pathway that requires erkB function, leading to an increase in cAMP and PKA activity.</text>
</comment>
<comment type="pathway">
    <text>Protein modification; protein ubiquitination.</text>
</comment>
<comment type="subunit">
    <text evidence="5">Part of a complex that includes culA, fbxA and regA. Formation of this complex is dependent on the MAP kinase erkB.</text>
</comment>
<comment type="PTM">
    <text evidence="2">Neddylated; which enhances the ubiquitination activity of SCF.</text>
</comment>
<comment type="disruption phenotype">
    <text evidence="5">Cells are defective in inducing cell-type-specific gene expression and exhibit defects during aggregation, including reduced chemotaxis.</text>
</comment>
<comment type="similarity">
    <text evidence="4">Belongs to the cullin family.</text>
</comment>
<reference key="1">
    <citation type="journal article" date="2001" name="Genes Dev.">
        <title>Regulated protein degradation controls PKA function and cell-type differentiation in Dictyostelium.</title>
        <authorList>
            <person name="Mohanty S."/>
            <person name="Lee S."/>
            <person name="Yadava N."/>
            <person name="Dealy M.J."/>
            <person name="Johnson R.S."/>
            <person name="Firtel R.A."/>
        </authorList>
    </citation>
    <scope>NUCLEOTIDE SEQUENCE [MRNA]</scope>
    <scope>FUNCTION</scope>
    <scope>SUBUNIT</scope>
    <scope>DISRUPTION PHENOTYPE</scope>
    <source>
        <strain>AX3</strain>
    </source>
</reference>
<reference key="2">
    <citation type="journal article" date="2005" name="Nature">
        <title>The genome of the social amoeba Dictyostelium discoideum.</title>
        <authorList>
            <person name="Eichinger L."/>
            <person name="Pachebat J.A."/>
            <person name="Gloeckner G."/>
            <person name="Rajandream M.A."/>
            <person name="Sucgang R."/>
            <person name="Berriman M."/>
            <person name="Song J."/>
            <person name="Olsen R."/>
            <person name="Szafranski K."/>
            <person name="Xu Q."/>
            <person name="Tunggal B."/>
            <person name="Kummerfeld S."/>
            <person name="Madera M."/>
            <person name="Konfortov B.A."/>
            <person name="Rivero F."/>
            <person name="Bankier A.T."/>
            <person name="Lehmann R."/>
            <person name="Hamlin N."/>
            <person name="Davies R."/>
            <person name="Gaudet P."/>
            <person name="Fey P."/>
            <person name="Pilcher K."/>
            <person name="Chen G."/>
            <person name="Saunders D."/>
            <person name="Sodergren E.J."/>
            <person name="Davis P."/>
            <person name="Kerhornou A."/>
            <person name="Nie X."/>
            <person name="Hall N."/>
            <person name="Anjard C."/>
            <person name="Hemphill L."/>
            <person name="Bason N."/>
            <person name="Farbrother P."/>
            <person name="Desany B."/>
            <person name="Just E."/>
            <person name="Morio T."/>
            <person name="Rost R."/>
            <person name="Churcher C.M."/>
            <person name="Cooper J."/>
            <person name="Haydock S."/>
            <person name="van Driessche N."/>
            <person name="Cronin A."/>
            <person name="Goodhead I."/>
            <person name="Muzny D.M."/>
            <person name="Mourier T."/>
            <person name="Pain A."/>
            <person name="Lu M."/>
            <person name="Harper D."/>
            <person name="Lindsay R."/>
            <person name="Hauser H."/>
            <person name="James K.D."/>
            <person name="Quiles M."/>
            <person name="Madan Babu M."/>
            <person name="Saito T."/>
            <person name="Buchrieser C."/>
            <person name="Wardroper A."/>
            <person name="Felder M."/>
            <person name="Thangavelu M."/>
            <person name="Johnson D."/>
            <person name="Knights A."/>
            <person name="Loulseged H."/>
            <person name="Mungall K.L."/>
            <person name="Oliver K."/>
            <person name="Price C."/>
            <person name="Quail M.A."/>
            <person name="Urushihara H."/>
            <person name="Hernandez J."/>
            <person name="Rabbinowitsch E."/>
            <person name="Steffen D."/>
            <person name="Sanders M."/>
            <person name="Ma J."/>
            <person name="Kohara Y."/>
            <person name="Sharp S."/>
            <person name="Simmonds M.N."/>
            <person name="Spiegler S."/>
            <person name="Tivey A."/>
            <person name="Sugano S."/>
            <person name="White B."/>
            <person name="Walker D."/>
            <person name="Woodward J.R."/>
            <person name="Winckler T."/>
            <person name="Tanaka Y."/>
            <person name="Shaulsky G."/>
            <person name="Schleicher M."/>
            <person name="Weinstock G.M."/>
            <person name="Rosenthal A."/>
            <person name="Cox E.C."/>
            <person name="Chisholm R.L."/>
            <person name="Gibbs R.A."/>
            <person name="Loomis W.F."/>
            <person name="Platzer M."/>
            <person name="Kay R.R."/>
            <person name="Williams J.G."/>
            <person name="Dear P.H."/>
            <person name="Noegel A.A."/>
            <person name="Barrell B.G."/>
            <person name="Kuspa A."/>
        </authorList>
    </citation>
    <scope>NUCLEOTIDE SEQUENCE [LARGE SCALE GENOMIC DNA]</scope>
    <source>
        <strain>AX4</strain>
    </source>
</reference>
<proteinExistence type="evidence at protein level"/>
<protein>
    <recommendedName>
        <fullName>Cullin-1</fullName>
        <shortName>CUL-1</shortName>
    </recommendedName>
    <alternativeName>
        <fullName>Cullin-A</fullName>
    </alternativeName>
</protein>
<sequence>MSMMTSTPTKRSVKLDDIWPELEEGIYKIITDLNKGFPKQKWIALYTHVYDYCAASQSKSSAKVGMPKQQASGANYVGEDLYNRLNLFLKKHMSQLLKLTETKMDEPLLNYYYTEWDRYTSAMKYINNIFQYMNRYWIKREIDDGKKEVYEIFILSLVIWRDCLFTPLKQRLTNSLLDIIESERNGYQINTHLIKGVINGYVSLGLNREKPKETILQVYKSGFEELFLTATENYYTNESAKFISENSVADYMKKVETRLNEEVKRVQQYLHQNTESELIAKCEKVLIEKHVEVIWNEFQTLLEKDKIPDLTRMYSLLSRIPRGLEPLRTTLEKHVQNVGLQAVSSIATNGVIEPKVYIETLLKVFKKYNELVTGAFRSDTGFVASLDKACRRFINENAVTIAAKSSSKSPELLARFTDFLLKKSPNNPEESEMEQLLNDVMIVFKYIEDKDVFQDFYSKMLAKRLIHGTSTSEDLEGTMIGKLKSTCGYEYTSKLQRMFTDMSLSRELLDRFNNHIEQVERSSLNIDFSVLVLATGSWPLQPPSTNFSIPKELQACEQLFQKFYQNQHSGRKLNWLHHLSKGELKTKYLQTSKSGYTLQCSTYQIGVLLQFNQYETLTSEEIQESTQLIDSVLKGTLTSLAKSKILLADPPLDDEEIAKTTKFSLNKQFKNKKTKIFINVPVLTQVKEEIDSIHKTVEEDRKLQIQAAIVRIMKMRKQLAHSGLMTEVISQLQTRFNPKVNIIKKCIDILIEKEYLMRVEGKKDHYSYVA</sequence>
<organism>
    <name type="scientific">Dictyostelium discoideum</name>
    <name type="common">Social amoeba</name>
    <dbReference type="NCBI Taxonomy" id="44689"/>
    <lineage>
        <taxon>Eukaryota</taxon>
        <taxon>Amoebozoa</taxon>
        <taxon>Evosea</taxon>
        <taxon>Eumycetozoa</taxon>
        <taxon>Dictyostelia</taxon>
        <taxon>Dictyosteliales</taxon>
        <taxon>Dictyosteliaceae</taxon>
        <taxon>Dictyostelium</taxon>
    </lineage>
</organism>
<keyword id="KW-1017">Isopeptide bond</keyword>
<keyword id="KW-1185">Reference proteome</keyword>
<keyword id="KW-0832">Ubl conjugation</keyword>
<keyword id="KW-0833">Ubl conjugation pathway</keyword>
<gene>
    <name type="primary">culA</name>
    <name type="synonym">cul1</name>
    <name type="ORF">DDB_G0291972</name>
</gene>
<evidence type="ECO:0000250" key="1"/>
<evidence type="ECO:0000250" key="2">
    <source>
        <dbReference type="UniProtKB" id="Q13616"/>
    </source>
</evidence>
<evidence type="ECO:0000255" key="3"/>
<evidence type="ECO:0000255" key="4">
    <source>
        <dbReference type="PROSITE-ProRule" id="PRU00330"/>
    </source>
</evidence>
<evidence type="ECO:0000269" key="5">
    <source>
    </source>
</evidence>